<accession>A7HNZ1</accession>
<name>RS20_PARL1</name>
<protein>
    <recommendedName>
        <fullName evidence="1">Small ribosomal subunit protein bS20</fullName>
    </recommendedName>
    <alternativeName>
        <fullName evidence="2">30S ribosomal protein S20</fullName>
    </alternativeName>
</protein>
<comment type="function">
    <text evidence="1">Binds directly to 16S ribosomal RNA.</text>
</comment>
<comment type="similarity">
    <text evidence="1">Belongs to the bacterial ribosomal protein bS20 family.</text>
</comment>
<reference key="1">
    <citation type="journal article" date="2011" name="Stand. Genomic Sci.">
        <title>Complete genome sequence of Parvibaculum lavamentivorans type strain (DS-1(T)).</title>
        <authorList>
            <person name="Schleheck D."/>
            <person name="Weiss M."/>
            <person name="Pitluck S."/>
            <person name="Bruce D."/>
            <person name="Land M.L."/>
            <person name="Han S."/>
            <person name="Saunders E."/>
            <person name="Tapia R."/>
            <person name="Detter C."/>
            <person name="Brettin T."/>
            <person name="Han J."/>
            <person name="Woyke T."/>
            <person name="Goodwin L."/>
            <person name="Pennacchio L."/>
            <person name="Nolan M."/>
            <person name="Cook A.M."/>
            <person name="Kjelleberg S."/>
            <person name="Thomas T."/>
        </authorList>
    </citation>
    <scope>NUCLEOTIDE SEQUENCE [LARGE SCALE GENOMIC DNA]</scope>
    <source>
        <strain>DS-1 / DSM 13023 / NCIMB 13966</strain>
    </source>
</reference>
<evidence type="ECO:0000255" key="1">
    <source>
        <dbReference type="HAMAP-Rule" id="MF_00500"/>
    </source>
</evidence>
<evidence type="ECO:0000305" key="2"/>
<proteinExistence type="inferred from homology"/>
<keyword id="KW-1185">Reference proteome</keyword>
<keyword id="KW-0687">Ribonucleoprotein</keyword>
<keyword id="KW-0689">Ribosomal protein</keyword>
<keyword id="KW-0694">RNA-binding</keyword>
<keyword id="KW-0699">rRNA-binding</keyword>
<dbReference type="EMBL" id="CP000774">
    <property type="protein sequence ID" value="ABS61624.1"/>
    <property type="molecule type" value="Genomic_DNA"/>
</dbReference>
<dbReference type="RefSeq" id="WP_011994915.1">
    <property type="nucleotide sequence ID" value="NC_009719.1"/>
</dbReference>
<dbReference type="SMR" id="A7HNZ1"/>
<dbReference type="STRING" id="402881.Plav_0001"/>
<dbReference type="KEGG" id="pla:Plav_0001"/>
<dbReference type="eggNOG" id="COG0268">
    <property type="taxonomic scope" value="Bacteria"/>
</dbReference>
<dbReference type="HOGENOM" id="CLU_160655_3_0_5"/>
<dbReference type="OrthoDB" id="9807974at2"/>
<dbReference type="Proteomes" id="UP000006377">
    <property type="component" value="Chromosome"/>
</dbReference>
<dbReference type="GO" id="GO:0005829">
    <property type="term" value="C:cytosol"/>
    <property type="evidence" value="ECO:0007669"/>
    <property type="project" value="TreeGrafter"/>
</dbReference>
<dbReference type="GO" id="GO:0015935">
    <property type="term" value="C:small ribosomal subunit"/>
    <property type="evidence" value="ECO:0007669"/>
    <property type="project" value="TreeGrafter"/>
</dbReference>
<dbReference type="GO" id="GO:0070181">
    <property type="term" value="F:small ribosomal subunit rRNA binding"/>
    <property type="evidence" value="ECO:0007669"/>
    <property type="project" value="TreeGrafter"/>
</dbReference>
<dbReference type="GO" id="GO:0003735">
    <property type="term" value="F:structural constituent of ribosome"/>
    <property type="evidence" value="ECO:0007669"/>
    <property type="project" value="InterPro"/>
</dbReference>
<dbReference type="GO" id="GO:0006412">
    <property type="term" value="P:translation"/>
    <property type="evidence" value="ECO:0007669"/>
    <property type="project" value="UniProtKB-UniRule"/>
</dbReference>
<dbReference type="FunFam" id="1.20.58.110:FF:000001">
    <property type="entry name" value="30S ribosomal protein S20"/>
    <property type="match status" value="1"/>
</dbReference>
<dbReference type="Gene3D" id="1.20.58.110">
    <property type="entry name" value="Ribosomal protein S20"/>
    <property type="match status" value="1"/>
</dbReference>
<dbReference type="HAMAP" id="MF_00500">
    <property type="entry name" value="Ribosomal_bS20"/>
    <property type="match status" value="1"/>
</dbReference>
<dbReference type="InterPro" id="IPR002583">
    <property type="entry name" value="Ribosomal_bS20"/>
</dbReference>
<dbReference type="InterPro" id="IPR036510">
    <property type="entry name" value="Ribosomal_bS20_sf"/>
</dbReference>
<dbReference type="NCBIfam" id="TIGR00029">
    <property type="entry name" value="S20"/>
    <property type="match status" value="1"/>
</dbReference>
<dbReference type="PANTHER" id="PTHR33398">
    <property type="entry name" value="30S RIBOSOMAL PROTEIN S20"/>
    <property type="match status" value="1"/>
</dbReference>
<dbReference type="PANTHER" id="PTHR33398:SF1">
    <property type="entry name" value="SMALL RIBOSOMAL SUBUNIT PROTEIN BS20C"/>
    <property type="match status" value="1"/>
</dbReference>
<dbReference type="Pfam" id="PF01649">
    <property type="entry name" value="Ribosomal_S20p"/>
    <property type="match status" value="1"/>
</dbReference>
<dbReference type="SUPFAM" id="SSF46992">
    <property type="entry name" value="Ribosomal protein S20"/>
    <property type="match status" value="1"/>
</dbReference>
<feature type="chain" id="PRO_1000072438" description="Small ribosomal subunit protein bS20">
    <location>
        <begin position="1"/>
        <end position="87"/>
    </location>
</feature>
<sequence length="87" mass="9664">MANTKSAKKAIRVIAKKTAVNKDRRSRMRTFVRKVEEALASGDKTAAQEALRAAQPEIMRAAQKGVIHKNTASRKVSRFTQRVKALS</sequence>
<gene>
    <name evidence="1" type="primary">rpsT</name>
    <name type="ordered locus">Plav_0001</name>
</gene>
<organism>
    <name type="scientific">Parvibaculum lavamentivorans (strain DS-1 / DSM 13023 / NCIMB 13966)</name>
    <dbReference type="NCBI Taxonomy" id="402881"/>
    <lineage>
        <taxon>Bacteria</taxon>
        <taxon>Pseudomonadati</taxon>
        <taxon>Pseudomonadota</taxon>
        <taxon>Alphaproteobacteria</taxon>
        <taxon>Hyphomicrobiales</taxon>
        <taxon>Parvibaculaceae</taxon>
        <taxon>Parvibaculum</taxon>
    </lineage>
</organism>